<comment type="subcellular location">
    <subcellularLocation>
        <location evidence="2">Membrane</location>
        <topology evidence="2">Single-pass membrane protein</topology>
    </subcellularLocation>
</comment>
<keyword id="KW-0472">Membrane</keyword>
<keyword id="KW-1185">Reference proteome</keyword>
<keyword id="KW-0812">Transmembrane</keyword>
<keyword id="KW-1133">Transmembrane helix</keyword>
<protein>
    <recommendedName>
        <fullName>Uncharacterized protein UU061</fullName>
    </recommendedName>
</protein>
<organism>
    <name type="scientific">Ureaplasma parvum serovar 3 (strain ATCC 700970)</name>
    <dbReference type="NCBI Taxonomy" id="273119"/>
    <lineage>
        <taxon>Bacteria</taxon>
        <taxon>Bacillati</taxon>
        <taxon>Mycoplasmatota</taxon>
        <taxon>Mycoplasmoidales</taxon>
        <taxon>Mycoplasmoidaceae</taxon>
        <taxon>Ureaplasma</taxon>
    </lineage>
</organism>
<gene>
    <name type="ordered locus">UU061</name>
</gene>
<evidence type="ECO:0000255" key="1"/>
<evidence type="ECO:0000305" key="2"/>
<dbReference type="EMBL" id="AF222894">
    <property type="protein sequence ID" value="AAF30466.1"/>
    <property type="molecule type" value="Genomic_DNA"/>
</dbReference>
<dbReference type="RefSeq" id="WP_006689028.1">
    <property type="nucleotide sequence ID" value="NC_002162.1"/>
</dbReference>
<dbReference type="SMR" id="Q9PR84"/>
<dbReference type="STRING" id="273119.UU061"/>
<dbReference type="EnsemblBacteria" id="AAF30466">
    <property type="protein sequence ID" value="AAF30466"/>
    <property type="gene ID" value="UU061"/>
</dbReference>
<dbReference type="GeneID" id="29672252"/>
<dbReference type="KEGG" id="uur:UU061"/>
<dbReference type="eggNOG" id="ENOG50338H3">
    <property type="taxonomic scope" value="Bacteria"/>
</dbReference>
<dbReference type="HOGENOM" id="CLU_1053542_0_0_14"/>
<dbReference type="OrthoDB" id="9886123at2"/>
<dbReference type="Proteomes" id="UP000000423">
    <property type="component" value="Chromosome"/>
</dbReference>
<dbReference type="GO" id="GO:0016020">
    <property type="term" value="C:membrane"/>
    <property type="evidence" value="ECO:0007669"/>
    <property type="project" value="UniProtKB-SubCell"/>
</dbReference>
<accession>Q9PR84</accession>
<reference key="1">
    <citation type="journal article" date="2000" name="Nature">
        <title>The complete sequence of the mucosal pathogen Ureaplasma urealyticum.</title>
        <authorList>
            <person name="Glass J.I."/>
            <person name="Lefkowitz E.J."/>
            <person name="Glass J.S."/>
            <person name="Heiner C.R."/>
            <person name="Chen E.Y."/>
            <person name="Cassell G.H."/>
        </authorList>
    </citation>
    <scope>NUCLEOTIDE SEQUENCE [LARGE SCALE GENOMIC DNA]</scope>
    <source>
        <strain>ATCC 700970</strain>
    </source>
</reference>
<feature type="chain" id="PRO_0000220794" description="Uncharacterized protein UU061">
    <location>
        <begin position="1"/>
        <end position="264"/>
    </location>
</feature>
<feature type="transmembrane region" description="Helical" evidence="1">
    <location>
        <begin position="9"/>
        <end position="29"/>
    </location>
</feature>
<proteinExistence type="predicted"/>
<sequence>MTSLDITTLVISILSLIATLSISFNIYFIELRKQRERKIERLQQEAKQFIINNLDEKDFIVLCQFIYKLYKHDKHTRKIHYEFVLLNEPVQKEVFKQLEILNIVDFKDNEWIANKFSILKEIVNDYQLGNWDDYKFYENFNFAYTLFREEKCDAVFEEIKQNKFGGKNLSFHEYLNEYAHRSKESDMLAPIDYFIDQNNLNNVFDRQKHAIYKLYLLDLILNELCRSMNNDHRINNEFKYFDCEVIYVEDLYLKILYKLYFQLN</sequence>
<name>Y061_UREPA</name>